<comment type="function">
    <text evidence="1">Binds directly to 23S rRNA. The L1 stalk is quite mobile in the ribosome, and is involved in E site tRNA release.</text>
</comment>
<comment type="function">
    <text evidence="1">Protein L1 is also a translational repressor protein, it controls the translation of the L11 operon by binding to its mRNA.</text>
</comment>
<comment type="subunit">
    <text evidence="1">Part of the 50S ribosomal subunit.</text>
</comment>
<comment type="similarity">
    <text evidence="1">Belongs to the universal ribosomal protein uL1 family.</text>
</comment>
<organism>
    <name type="scientific">Francisella tularensis subsp. mediasiatica (strain FSC147)</name>
    <dbReference type="NCBI Taxonomy" id="441952"/>
    <lineage>
        <taxon>Bacteria</taxon>
        <taxon>Pseudomonadati</taxon>
        <taxon>Pseudomonadota</taxon>
        <taxon>Gammaproteobacteria</taxon>
        <taxon>Thiotrichales</taxon>
        <taxon>Francisellaceae</taxon>
        <taxon>Francisella</taxon>
    </lineage>
</organism>
<dbReference type="EMBL" id="CP000915">
    <property type="protein sequence ID" value="ACD30286.1"/>
    <property type="molecule type" value="Genomic_DNA"/>
</dbReference>
<dbReference type="SMR" id="B2SFD3"/>
<dbReference type="KEGG" id="ftm:FTM_0206"/>
<dbReference type="HOGENOM" id="CLU_062853_0_0_6"/>
<dbReference type="GO" id="GO:0022625">
    <property type="term" value="C:cytosolic large ribosomal subunit"/>
    <property type="evidence" value="ECO:0007669"/>
    <property type="project" value="TreeGrafter"/>
</dbReference>
<dbReference type="GO" id="GO:0019843">
    <property type="term" value="F:rRNA binding"/>
    <property type="evidence" value="ECO:0007669"/>
    <property type="project" value="UniProtKB-UniRule"/>
</dbReference>
<dbReference type="GO" id="GO:0003735">
    <property type="term" value="F:structural constituent of ribosome"/>
    <property type="evidence" value="ECO:0007669"/>
    <property type="project" value="InterPro"/>
</dbReference>
<dbReference type="GO" id="GO:0000049">
    <property type="term" value="F:tRNA binding"/>
    <property type="evidence" value="ECO:0007669"/>
    <property type="project" value="UniProtKB-KW"/>
</dbReference>
<dbReference type="GO" id="GO:0006417">
    <property type="term" value="P:regulation of translation"/>
    <property type="evidence" value="ECO:0007669"/>
    <property type="project" value="UniProtKB-KW"/>
</dbReference>
<dbReference type="GO" id="GO:0006412">
    <property type="term" value="P:translation"/>
    <property type="evidence" value="ECO:0007669"/>
    <property type="project" value="UniProtKB-UniRule"/>
</dbReference>
<dbReference type="CDD" id="cd00403">
    <property type="entry name" value="Ribosomal_L1"/>
    <property type="match status" value="1"/>
</dbReference>
<dbReference type="FunFam" id="3.40.50.790:FF:000001">
    <property type="entry name" value="50S ribosomal protein L1"/>
    <property type="match status" value="1"/>
</dbReference>
<dbReference type="Gene3D" id="3.30.190.20">
    <property type="match status" value="1"/>
</dbReference>
<dbReference type="Gene3D" id="3.40.50.790">
    <property type="match status" value="1"/>
</dbReference>
<dbReference type="HAMAP" id="MF_01318_B">
    <property type="entry name" value="Ribosomal_uL1_B"/>
    <property type="match status" value="1"/>
</dbReference>
<dbReference type="InterPro" id="IPR005878">
    <property type="entry name" value="Ribosom_uL1_bac-type"/>
</dbReference>
<dbReference type="InterPro" id="IPR002143">
    <property type="entry name" value="Ribosomal_uL1"/>
</dbReference>
<dbReference type="InterPro" id="IPR023674">
    <property type="entry name" value="Ribosomal_uL1-like"/>
</dbReference>
<dbReference type="InterPro" id="IPR028364">
    <property type="entry name" value="Ribosomal_uL1/biogenesis"/>
</dbReference>
<dbReference type="InterPro" id="IPR016095">
    <property type="entry name" value="Ribosomal_uL1_3-a/b-sand"/>
</dbReference>
<dbReference type="InterPro" id="IPR023673">
    <property type="entry name" value="Ribosomal_uL1_CS"/>
</dbReference>
<dbReference type="NCBIfam" id="TIGR01169">
    <property type="entry name" value="rplA_bact"/>
    <property type="match status" value="1"/>
</dbReference>
<dbReference type="PANTHER" id="PTHR36427">
    <property type="entry name" value="54S RIBOSOMAL PROTEIN L1, MITOCHONDRIAL"/>
    <property type="match status" value="1"/>
</dbReference>
<dbReference type="PANTHER" id="PTHR36427:SF3">
    <property type="entry name" value="LARGE RIBOSOMAL SUBUNIT PROTEIN UL1M"/>
    <property type="match status" value="1"/>
</dbReference>
<dbReference type="Pfam" id="PF00687">
    <property type="entry name" value="Ribosomal_L1"/>
    <property type="match status" value="1"/>
</dbReference>
<dbReference type="PIRSF" id="PIRSF002155">
    <property type="entry name" value="Ribosomal_L1"/>
    <property type="match status" value="1"/>
</dbReference>
<dbReference type="SUPFAM" id="SSF56808">
    <property type="entry name" value="Ribosomal protein L1"/>
    <property type="match status" value="1"/>
</dbReference>
<dbReference type="PROSITE" id="PS01199">
    <property type="entry name" value="RIBOSOMAL_L1"/>
    <property type="match status" value="1"/>
</dbReference>
<gene>
    <name evidence="1" type="primary">rplA</name>
    <name type="ordered locus">FTM_0206</name>
</gene>
<proteinExistence type="inferred from homology"/>
<evidence type="ECO:0000255" key="1">
    <source>
        <dbReference type="HAMAP-Rule" id="MF_01318"/>
    </source>
</evidence>
<evidence type="ECO:0000305" key="2"/>
<reference key="1">
    <citation type="journal article" date="2009" name="PLoS Pathog.">
        <title>Molecular evolutionary consequences of niche restriction in Francisella tularensis, a facultative intracellular pathogen.</title>
        <authorList>
            <person name="Larsson P."/>
            <person name="Elfsmark D."/>
            <person name="Svensson K."/>
            <person name="Wikstroem P."/>
            <person name="Forsman M."/>
            <person name="Brettin T."/>
            <person name="Keim P."/>
            <person name="Johansson A."/>
        </authorList>
    </citation>
    <scope>NUCLEOTIDE SEQUENCE [LARGE SCALE GENOMIC DNA]</scope>
    <source>
        <strain>FSC147</strain>
    </source>
</reference>
<keyword id="KW-0678">Repressor</keyword>
<keyword id="KW-0687">Ribonucleoprotein</keyword>
<keyword id="KW-0689">Ribosomal protein</keyword>
<keyword id="KW-0694">RNA-binding</keyword>
<keyword id="KW-0699">rRNA-binding</keyword>
<keyword id="KW-0810">Translation regulation</keyword>
<keyword id="KW-0820">tRNA-binding</keyword>
<name>RL1_FRATM</name>
<protein>
    <recommendedName>
        <fullName evidence="1">Large ribosomal subunit protein uL1</fullName>
    </recommendedName>
    <alternativeName>
        <fullName evidence="2">50S ribosomal protein L1</fullName>
    </alternativeName>
</protein>
<accession>B2SFD3</accession>
<feature type="chain" id="PRO_1000141408" description="Large ribosomal subunit protein uL1">
    <location>
        <begin position="1"/>
        <end position="231"/>
    </location>
</feature>
<sequence length="231" mass="24496">MAKVSKRMKEISAKINAEKKYPVSEAFDLLREVSSVKFVESVDVSVALGVDPRKSDQVVRGASVLPNGTGKTVRVAVFAKGPAADAAKEAGAEVVGMEDLADEVKKGNMDFDVVIASPDSMRVVGQLGQILGPKGLMPNPKVGTVTMDVAKAVRDAKAGQVRYRVDKAGIIHTTIGKVNFTSDALKQNLEQLLTDLKKAKPAVSKGIYLKKVSVSSTMGPGINVDFSDLNI</sequence>